<comment type="function">
    <text evidence="1">Involved in the biosynthesis of osmoregulated periplasmic glucans (OPGs).</text>
</comment>
<comment type="pathway">
    <text>Glycan metabolism; osmoregulated periplasmic glucan (OPG) biosynthesis.</text>
</comment>
<comment type="subcellular location">
    <subcellularLocation>
        <location evidence="1">Periplasm</location>
    </subcellularLocation>
</comment>
<comment type="similarity">
    <text evidence="3">Belongs to the OpgD/OpgG family.</text>
</comment>
<gene>
    <name type="primary">opgG</name>
    <name type="synonym">mdoG</name>
    <name type="ordered locus">RSc2908</name>
    <name type="ORF">RS00186</name>
</gene>
<evidence type="ECO:0000250" key="1"/>
<evidence type="ECO:0000255" key="2"/>
<evidence type="ECO:0000305" key="3"/>
<protein>
    <recommendedName>
        <fullName>Glucans biosynthesis protein G</fullName>
    </recommendedName>
</protein>
<keyword id="KW-0574">Periplasm</keyword>
<keyword id="KW-1185">Reference proteome</keyword>
<keyword id="KW-0732">Signal</keyword>
<name>OPGG_RALN1</name>
<organism>
    <name type="scientific">Ralstonia nicotianae (strain ATCC BAA-1114 / GMI1000)</name>
    <name type="common">Ralstonia solanacearum</name>
    <dbReference type="NCBI Taxonomy" id="267608"/>
    <lineage>
        <taxon>Bacteria</taxon>
        <taxon>Pseudomonadati</taxon>
        <taxon>Pseudomonadota</taxon>
        <taxon>Betaproteobacteria</taxon>
        <taxon>Burkholderiales</taxon>
        <taxon>Burkholderiaceae</taxon>
        <taxon>Ralstonia</taxon>
        <taxon>Ralstonia solanacearum species complex</taxon>
    </lineage>
</organism>
<sequence>MRLAVGLLALASAQAALAFGLNDVAARAKQLAAKPYQAPPDTLPHELRELRYDQYREIRFKSDQAYWRRDKLPFELGFFHEGSYYDQPVKINEVSPAGAREIRFDPRLFDYGPVKLDPKHLRNLGFAGFRIHYPMNTPKYKDEVIVFLGASYFRGIGKGQVYGLSARGLAIDTALNSGEEFPRFTEFWIERPAANAKELTIYALLNSRRATGAYRFVIKPGTDTEVDVKAQLYMRENVSKLGIAPLTSMFFFGENQPASALDFRPEVHDSDGLSMLSGTGEWIWRPLTNPKRLLVSSFSTTNPGGFGLMQRDRAFSSYQEIGDRYELRPSAWVEPVGKWGAGRVELVQIPTPDETNDNVVAYWVPETPPKPQQPFNLEYRLLWQKEGDKKPGLSWVTQTRRSHGWTTKRPDERKPDDTIALVVDFEGPALAKLPPNAPVEPVFTADANGKIESIFGQPNTATGGWRVTVRLKRVDDDKPIELRGYLRSGGTGLSETWSYLLPPG</sequence>
<accession>Q8XVC3</accession>
<proteinExistence type="inferred from homology"/>
<dbReference type="EMBL" id="AL646052">
    <property type="protein sequence ID" value="CAD16615.1"/>
    <property type="molecule type" value="Genomic_DNA"/>
</dbReference>
<dbReference type="SMR" id="Q8XVC3"/>
<dbReference type="STRING" id="267608.RSc2908"/>
<dbReference type="EnsemblBacteria" id="CAD16615">
    <property type="protein sequence ID" value="CAD16615"/>
    <property type="gene ID" value="RSc2908"/>
</dbReference>
<dbReference type="KEGG" id="rso:RSc2908"/>
<dbReference type="eggNOG" id="COG3131">
    <property type="taxonomic scope" value="Bacteria"/>
</dbReference>
<dbReference type="HOGENOM" id="CLU_023403_2_0_4"/>
<dbReference type="UniPathway" id="UPA00637"/>
<dbReference type="Proteomes" id="UP000001436">
    <property type="component" value="Chromosome"/>
</dbReference>
<dbReference type="GO" id="GO:0030288">
    <property type="term" value="C:outer membrane-bounded periplasmic space"/>
    <property type="evidence" value="ECO:0007669"/>
    <property type="project" value="TreeGrafter"/>
</dbReference>
<dbReference type="GO" id="GO:0030246">
    <property type="term" value="F:carbohydrate binding"/>
    <property type="evidence" value="ECO:0007669"/>
    <property type="project" value="InterPro"/>
</dbReference>
<dbReference type="GO" id="GO:0003824">
    <property type="term" value="F:catalytic activity"/>
    <property type="evidence" value="ECO:0007669"/>
    <property type="project" value="InterPro"/>
</dbReference>
<dbReference type="GO" id="GO:0051274">
    <property type="term" value="P:beta-glucan biosynthetic process"/>
    <property type="evidence" value="ECO:0007669"/>
    <property type="project" value="TreeGrafter"/>
</dbReference>
<dbReference type="FunFam" id="2.70.98.10:FF:000001">
    <property type="entry name" value="Glucans biosynthesis protein G"/>
    <property type="match status" value="1"/>
</dbReference>
<dbReference type="Gene3D" id="2.70.98.10">
    <property type="match status" value="1"/>
</dbReference>
<dbReference type="Gene3D" id="2.60.40.10">
    <property type="entry name" value="Immunoglobulins"/>
    <property type="match status" value="1"/>
</dbReference>
<dbReference type="HAMAP" id="MF_01069">
    <property type="entry name" value="MdoG_OpgG"/>
    <property type="match status" value="1"/>
</dbReference>
<dbReference type="InterPro" id="IPR011013">
    <property type="entry name" value="Gal_mutarotase_sf_dom"/>
</dbReference>
<dbReference type="InterPro" id="IPR014718">
    <property type="entry name" value="GH-type_carb-bd"/>
</dbReference>
<dbReference type="InterPro" id="IPR014438">
    <property type="entry name" value="Glucan_biosyn_MdoG/MdoD"/>
</dbReference>
<dbReference type="InterPro" id="IPR007444">
    <property type="entry name" value="Glucan_biosyn_MdoG_C"/>
</dbReference>
<dbReference type="InterPro" id="IPR013783">
    <property type="entry name" value="Ig-like_fold"/>
</dbReference>
<dbReference type="InterPro" id="IPR014756">
    <property type="entry name" value="Ig_E-set"/>
</dbReference>
<dbReference type="InterPro" id="IPR023704">
    <property type="entry name" value="MdoG_OpgG"/>
</dbReference>
<dbReference type="PANTHER" id="PTHR30504">
    <property type="entry name" value="GLUCANS BIOSYNTHESIS PROTEIN"/>
    <property type="match status" value="1"/>
</dbReference>
<dbReference type="PANTHER" id="PTHR30504:SF4">
    <property type="entry name" value="GLUCANS BIOSYNTHESIS PROTEIN G"/>
    <property type="match status" value="1"/>
</dbReference>
<dbReference type="Pfam" id="PF04349">
    <property type="entry name" value="MdoG"/>
    <property type="match status" value="1"/>
</dbReference>
<dbReference type="PIRSF" id="PIRSF006281">
    <property type="entry name" value="MdoG"/>
    <property type="match status" value="1"/>
</dbReference>
<dbReference type="SUPFAM" id="SSF81296">
    <property type="entry name" value="E set domains"/>
    <property type="match status" value="1"/>
</dbReference>
<dbReference type="SUPFAM" id="SSF74650">
    <property type="entry name" value="Galactose mutarotase-like"/>
    <property type="match status" value="1"/>
</dbReference>
<feature type="signal peptide" evidence="2">
    <location>
        <begin position="1"/>
        <end position="15"/>
    </location>
</feature>
<feature type="chain" id="PRO_0000020229" description="Glucans biosynthesis protein G">
    <location>
        <begin position="16"/>
        <end position="504"/>
    </location>
</feature>
<reference key="1">
    <citation type="journal article" date="2002" name="Nature">
        <title>Genome sequence of the plant pathogen Ralstonia solanacearum.</title>
        <authorList>
            <person name="Salanoubat M."/>
            <person name="Genin S."/>
            <person name="Artiguenave F."/>
            <person name="Gouzy J."/>
            <person name="Mangenot S."/>
            <person name="Arlat M."/>
            <person name="Billault A."/>
            <person name="Brottier P."/>
            <person name="Camus J.-C."/>
            <person name="Cattolico L."/>
            <person name="Chandler M."/>
            <person name="Choisne N."/>
            <person name="Claudel-Renard C."/>
            <person name="Cunnac S."/>
            <person name="Demange N."/>
            <person name="Gaspin C."/>
            <person name="Lavie M."/>
            <person name="Moisan A."/>
            <person name="Robert C."/>
            <person name="Saurin W."/>
            <person name="Schiex T."/>
            <person name="Siguier P."/>
            <person name="Thebault P."/>
            <person name="Whalen M."/>
            <person name="Wincker P."/>
            <person name="Levy M."/>
            <person name="Weissenbach J."/>
            <person name="Boucher C.A."/>
        </authorList>
    </citation>
    <scope>NUCLEOTIDE SEQUENCE [LARGE SCALE GENOMIC DNA]</scope>
    <source>
        <strain>ATCC BAA-1114 / GMI1000</strain>
    </source>
</reference>